<protein>
    <recommendedName>
        <fullName evidence="1">Glutamyl-tRNA(Gln) amidotransferase subunit A</fullName>
        <shortName evidence="1">Glu-ADT subunit A</shortName>
        <ecNumber evidence="1">6.3.5.7</ecNumber>
    </recommendedName>
</protein>
<feature type="chain" id="PRO_0000241103" description="Glutamyl-tRNA(Gln) amidotransferase subunit A">
    <location>
        <begin position="1"/>
        <end position="481"/>
    </location>
</feature>
<feature type="active site" description="Charge relay system" evidence="1">
    <location>
        <position position="74"/>
    </location>
</feature>
<feature type="active site" description="Charge relay system" evidence="1">
    <location>
        <position position="149"/>
    </location>
</feature>
<feature type="active site" description="Acyl-ester intermediate" evidence="1">
    <location>
        <position position="173"/>
    </location>
</feature>
<comment type="function">
    <text evidence="1">Allows the formation of correctly charged Gln-tRNA(Gln) through the transamidation of misacylated Glu-tRNA(Gln) in organisms which lack glutaminyl-tRNA synthetase. The reaction takes place in the presence of glutamine and ATP through an activated gamma-phospho-Glu-tRNA(Gln).</text>
</comment>
<comment type="catalytic activity">
    <reaction evidence="1">
        <text>L-glutamyl-tRNA(Gln) + L-glutamine + ATP + H2O = L-glutaminyl-tRNA(Gln) + L-glutamate + ADP + phosphate + H(+)</text>
        <dbReference type="Rhea" id="RHEA:17521"/>
        <dbReference type="Rhea" id="RHEA-COMP:9681"/>
        <dbReference type="Rhea" id="RHEA-COMP:9684"/>
        <dbReference type="ChEBI" id="CHEBI:15377"/>
        <dbReference type="ChEBI" id="CHEBI:15378"/>
        <dbReference type="ChEBI" id="CHEBI:29985"/>
        <dbReference type="ChEBI" id="CHEBI:30616"/>
        <dbReference type="ChEBI" id="CHEBI:43474"/>
        <dbReference type="ChEBI" id="CHEBI:58359"/>
        <dbReference type="ChEBI" id="CHEBI:78520"/>
        <dbReference type="ChEBI" id="CHEBI:78521"/>
        <dbReference type="ChEBI" id="CHEBI:456216"/>
        <dbReference type="EC" id="6.3.5.7"/>
    </reaction>
</comment>
<comment type="subunit">
    <text evidence="1">Heterotrimer of A, B and C subunits.</text>
</comment>
<comment type="similarity">
    <text evidence="1">Belongs to the amidase family. GatA subfamily.</text>
</comment>
<proteinExistence type="inferred from homology"/>
<dbReference type="EC" id="6.3.5.7" evidence="1"/>
<dbReference type="EMBL" id="AJ749949">
    <property type="protein sequence ID" value="CAG44653.1"/>
    <property type="molecule type" value="Genomic_DNA"/>
</dbReference>
<dbReference type="RefSeq" id="WP_003022862.1">
    <property type="nucleotide sequence ID" value="NC_006570.2"/>
</dbReference>
<dbReference type="RefSeq" id="YP_169096.1">
    <property type="nucleotide sequence ID" value="NC_006570.2"/>
</dbReference>
<dbReference type="SMR" id="Q5NIP6"/>
<dbReference type="IntAct" id="Q5NIP6">
    <property type="interactions" value="15"/>
</dbReference>
<dbReference type="STRING" id="177416.FTT_0020"/>
<dbReference type="DNASU" id="3191915"/>
<dbReference type="EnsemblBacteria" id="CAG44653">
    <property type="protein sequence ID" value="CAG44653"/>
    <property type="gene ID" value="FTT_0020"/>
</dbReference>
<dbReference type="KEGG" id="ftu:FTT_0020"/>
<dbReference type="eggNOG" id="COG0154">
    <property type="taxonomic scope" value="Bacteria"/>
</dbReference>
<dbReference type="OrthoDB" id="9811471at2"/>
<dbReference type="Proteomes" id="UP000001174">
    <property type="component" value="Chromosome"/>
</dbReference>
<dbReference type="GO" id="GO:0030956">
    <property type="term" value="C:glutamyl-tRNA(Gln) amidotransferase complex"/>
    <property type="evidence" value="ECO:0007669"/>
    <property type="project" value="InterPro"/>
</dbReference>
<dbReference type="GO" id="GO:0005524">
    <property type="term" value="F:ATP binding"/>
    <property type="evidence" value="ECO:0007669"/>
    <property type="project" value="UniProtKB-KW"/>
</dbReference>
<dbReference type="GO" id="GO:0050567">
    <property type="term" value="F:glutaminyl-tRNA synthase (glutamine-hydrolyzing) activity"/>
    <property type="evidence" value="ECO:0007669"/>
    <property type="project" value="UniProtKB-UniRule"/>
</dbReference>
<dbReference type="GO" id="GO:0006412">
    <property type="term" value="P:translation"/>
    <property type="evidence" value="ECO:0007669"/>
    <property type="project" value="UniProtKB-UniRule"/>
</dbReference>
<dbReference type="Gene3D" id="3.90.1300.10">
    <property type="entry name" value="Amidase signature (AS) domain"/>
    <property type="match status" value="1"/>
</dbReference>
<dbReference type="HAMAP" id="MF_00120">
    <property type="entry name" value="GatA"/>
    <property type="match status" value="1"/>
</dbReference>
<dbReference type="InterPro" id="IPR000120">
    <property type="entry name" value="Amidase"/>
</dbReference>
<dbReference type="InterPro" id="IPR020556">
    <property type="entry name" value="Amidase_CS"/>
</dbReference>
<dbReference type="InterPro" id="IPR023631">
    <property type="entry name" value="Amidase_dom"/>
</dbReference>
<dbReference type="InterPro" id="IPR036928">
    <property type="entry name" value="AS_sf"/>
</dbReference>
<dbReference type="InterPro" id="IPR004412">
    <property type="entry name" value="GatA"/>
</dbReference>
<dbReference type="NCBIfam" id="TIGR00132">
    <property type="entry name" value="gatA"/>
    <property type="match status" value="1"/>
</dbReference>
<dbReference type="PANTHER" id="PTHR11895:SF151">
    <property type="entry name" value="GLUTAMYL-TRNA(GLN) AMIDOTRANSFERASE SUBUNIT A"/>
    <property type="match status" value="1"/>
</dbReference>
<dbReference type="PANTHER" id="PTHR11895">
    <property type="entry name" value="TRANSAMIDASE"/>
    <property type="match status" value="1"/>
</dbReference>
<dbReference type="Pfam" id="PF01425">
    <property type="entry name" value="Amidase"/>
    <property type="match status" value="1"/>
</dbReference>
<dbReference type="SUPFAM" id="SSF75304">
    <property type="entry name" value="Amidase signature (AS) enzymes"/>
    <property type="match status" value="1"/>
</dbReference>
<dbReference type="PROSITE" id="PS00571">
    <property type="entry name" value="AMIDASES"/>
    <property type="match status" value="1"/>
</dbReference>
<reference key="1">
    <citation type="journal article" date="2005" name="Nat. Genet.">
        <title>The complete genome sequence of Francisella tularensis, the causative agent of tularemia.</title>
        <authorList>
            <person name="Larsson P."/>
            <person name="Oyston P.C.F."/>
            <person name="Chain P."/>
            <person name="Chu M.C."/>
            <person name="Duffield M."/>
            <person name="Fuxelius H.-H."/>
            <person name="Garcia E."/>
            <person name="Haelltorp G."/>
            <person name="Johansson D."/>
            <person name="Isherwood K.E."/>
            <person name="Karp P.D."/>
            <person name="Larsson E."/>
            <person name="Liu Y."/>
            <person name="Michell S."/>
            <person name="Prior J."/>
            <person name="Prior R."/>
            <person name="Malfatti S."/>
            <person name="Sjoestedt A."/>
            <person name="Svensson K."/>
            <person name="Thompson N."/>
            <person name="Vergez L."/>
            <person name="Wagg J.K."/>
            <person name="Wren B.W."/>
            <person name="Lindler L.E."/>
            <person name="Andersson S.G.E."/>
            <person name="Forsman M."/>
            <person name="Titball R.W."/>
        </authorList>
    </citation>
    <scope>NUCLEOTIDE SEQUENCE [LARGE SCALE GENOMIC DNA]</scope>
    <source>
        <strain>SCHU S4 / Schu 4</strain>
    </source>
</reference>
<name>GATA_FRATT</name>
<evidence type="ECO:0000255" key="1">
    <source>
        <dbReference type="HAMAP-Rule" id="MF_00120"/>
    </source>
</evidence>
<accession>Q5NIP6</accession>
<keyword id="KW-0067">ATP-binding</keyword>
<keyword id="KW-0436">Ligase</keyword>
<keyword id="KW-0547">Nucleotide-binding</keyword>
<keyword id="KW-0648">Protein biosynthesis</keyword>
<keyword id="KW-1185">Reference proteome</keyword>
<organism>
    <name type="scientific">Francisella tularensis subsp. tularensis (strain SCHU S4 / Schu 4)</name>
    <dbReference type="NCBI Taxonomy" id="177416"/>
    <lineage>
        <taxon>Bacteria</taxon>
        <taxon>Pseudomonadati</taxon>
        <taxon>Pseudomonadota</taxon>
        <taxon>Gammaproteobacteria</taxon>
        <taxon>Thiotrichales</taxon>
        <taxon>Francisellaceae</taxon>
        <taxon>Francisella</taxon>
    </lineage>
</organism>
<sequence length="481" mass="52303">MSYIKKLRARLDSGEISAVELTKEYLAKIKEQDKRINSVITLCEAEALKEAEDADAIISAGKQGLLTGIPILHKDLFCTKGIRTTAASKMLDNFVAPYDSTVTKNCKDQGMVTLGKLNMDEFAMGSTNEYSYYGAVSNPWDLERVPGGSSGGSAAAVAAGFAPISTGSDTGGSVRQPASFCGLTAMKPSYGSTSRFGMVAFASSFDQAGVLGHYAEDVAIMLDAIAGECEFDSTCVGVKQNHFTQDLEKDISGKVIGVDESLIKDLPAQIQEAVSKTLDNFKKLGAEIKSVKVPDLKEALSTYYIITPAEAAANLARYDGIRYGYRNPEARDLDELYRKSRTDGFGAEVKRRIMIGNYVLASSQYDSYYNKAQQLRKVMTDQINQIFTQVDAIFMPASPSEAFKKGDKLDPVSAYLSDIYTIPANISGLPAIAFPIGFANNLPVGGQLMAKAFNDNILTQMVVQYQKHYGIEEFILQQARI</sequence>
<gene>
    <name evidence="1" type="primary">gatA</name>
    <name type="ordered locus">FTT_0020</name>
</gene>